<name>MIA40_DANRE</name>
<dbReference type="EMBL" id="BC077126">
    <property type="protein sequence ID" value="AAH77126.1"/>
    <property type="molecule type" value="mRNA"/>
</dbReference>
<dbReference type="RefSeq" id="NP_001003538.1">
    <property type="nucleotide sequence ID" value="NM_001003538.2"/>
</dbReference>
<dbReference type="SMR" id="Q6DEI8"/>
<dbReference type="FunCoup" id="Q6DEI8">
    <property type="interactions" value="612"/>
</dbReference>
<dbReference type="STRING" id="7955.ENSDARP00000039846"/>
<dbReference type="PaxDb" id="7955-ENSDARP00000039846"/>
<dbReference type="DNASU" id="445144"/>
<dbReference type="GeneID" id="445144"/>
<dbReference type="KEGG" id="dre:445144"/>
<dbReference type="AGR" id="ZFIN:ZDB-GENE-040801-46"/>
<dbReference type="CTD" id="445144"/>
<dbReference type="ZFIN" id="ZDB-GENE-040801-46">
    <property type="gene designation" value="chchd4a"/>
</dbReference>
<dbReference type="eggNOG" id="KOG4149">
    <property type="taxonomic scope" value="Eukaryota"/>
</dbReference>
<dbReference type="InParanoid" id="Q6DEI8"/>
<dbReference type="OrthoDB" id="7481291at2759"/>
<dbReference type="PhylomeDB" id="Q6DEI8"/>
<dbReference type="PRO" id="PR:Q6DEI8"/>
<dbReference type="Proteomes" id="UP000000437">
    <property type="component" value="Alternate scaffold 11"/>
</dbReference>
<dbReference type="Proteomes" id="UP000000437">
    <property type="component" value="Chromosome 11"/>
</dbReference>
<dbReference type="GO" id="GO:0005758">
    <property type="term" value="C:mitochondrial intermembrane space"/>
    <property type="evidence" value="ECO:0000250"/>
    <property type="project" value="UniProtKB"/>
</dbReference>
<dbReference type="GO" id="GO:0015035">
    <property type="term" value="F:protein-disulfide reductase activity"/>
    <property type="evidence" value="ECO:0000250"/>
    <property type="project" value="UniProtKB"/>
</dbReference>
<dbReference type="GO" id="GO:0160203">
    <property type="term" value="P:mitochondrial disulfide relay system"/>
    <property type="evidence" value="ECO:0000250"/>
    <property type="project" value="UniProtKB"/>
</dbReference>
<dbReference type="GO" id="GO:0033108">
    <property type="term" value="P:mitochondrial respiratory chain complex assembly"/>
    <property type="evidence" value="ECO:0000250"/>
    <property type="project" value="UniProtKB"/>
</dbReference>
<dbReference type="GO" id="GO:0045041">
    <property type="term" value="P:protein import into mitochondrial intermembrane space"/>
    <property type="evidence" value="ECO:0000318"/>
    <property type="project" value="GO_Central"/>
</dbReference>
<dbReference type="FunFam" id="1.10.287.2900:FF:000001">
    <property type="entry name" value="mitochondrial intermembrane space import and assembly protein 40"/>
    <property type="match status" value="1"/>
</dbReference>
<dbReference type="Gene3D" id="1.10.287.2900">
    <property type="match status" value="1"/>
</dbReference>
<dbReference type="InterPro" id="IPR039289">
    <property type="entry name" value="CHCHD4"/>
</dbReference>
<dbReference type="PANTHER" id="PTHR21622">
    <property type="entry name" value="COILED-COIL-HELIX-COILED-COIL-HELIX DOMAIN CONTAINING 4"/>
    <property type="match status" value="1"/>
</dbReference>
<dbReference type="PANTHER" id="PTHR21622:SF0">
    <property type="entry name" value="COILED-COIL-HELIX-COILED-COIL-HELIX DOMAIN CONTAINING 4"/>
    <property type="match status" value="1"/>
</dbReference>
<dbReference type="PROSITE" id="PS51808">
    <property type="entry name" value="CHCH"/>
    <property type="match status" value="1"/>
</dbReference>
<protein>
    <recommendedName>
        <fullName>Mitochondrial intermembrane space import and assembly protein 40</fullName>
    </recommendedName>
    <alternativeName>
        <fullName>Coiled-coil-helix-coiled-coil-helix domain-containing protein 4</fullName>
    </alternativeName>
</protein>
<organism>
    <name type="scientific">Danio rerio</name>
    <name type="common">Zebrafish</name>
    <name type="synonym">Brachydanio rerio</name>
    <dbReference type="NCBI Taxonomy" id="7955"/>
    <lineage>
        <taxon>Eukaryota</taxon>
        <taxon>Metazoa</taxon>
        <taxon>Chordata</taxon>
        <taxon>Craniata</taxon>
        <taxon>Vertebrata</taxon>
        <taxon>Euteleostomi</taxon>
        <taxon>Actinopterygii</taxon>
        <taxon>Neopterygii</taxon>
        <taxon>Teleostei</taxon>
        <taxon>Ostariophysi</taxon>
        <taxon>Cypriniformes</taxon>
        <taxon>Danionidae</taxon>
        <taxon>Danioninae</taxon>
        <taxon>Danio</taxon>
    </lineage>
</organism>
<keyword id="KW-1015">Disulfide bond</keyword>
<keyword id="KW-0496">Mitochondrion</keyword>
<keyword id="KW-0560">Oxidoreductase</keyword>
<keyword id="KW-0653">Protein transport</keyword>
<keyword id="KW-0676">Redox-active center</keyword>
<keyword id="KW-1185">Reference proteome</keyword>
<keyword id="KW-0811">Translocation</keyword>
<keyword id="KW-0813">Transport</keyword>
<sequence>MSYCKQEGKDCIIFVTKEDHEAPSNAELVEDDPNDPYEDHGLILPNGDINWNCPCLGGMASGPCGQQFKDAFSCFHYSKEEIKGSDCVENFRGMQECMQKYPELYPQEDDNDSAPSGGANTAPTDSLPASSTDSTAAAATENPATS</sequence>
<accession>Q6DEI8</accession>
<reference key="1">
    <citation type="submission" date="2004-07" db="EMBL/GenBank/DDBJ databases">
        <authorList>
            <consortium name="NIH - Zebrafish Gene Collection (ZGC) project"/>
        </authorList>
    </citation>
    <scope>NUCLEOTIDE SEQUENCE [LARGE SCALE MRNA]</scope>
    <source>
        <tissue>Embryo</tissue>
    </source>
</reference>
<evidence type="ECO:0000250" key="1"/>
<evidence type="ECO:0000250" key="2">
    <source>
        <dbReference type="UniProtKB" id="Q2KHZ4"/>
    </source>
</evidence>
<evidence type="ECO:0000250" key="3">
    <source>
        <dbReference type="UniProtKB" id="Q8N4Q1"/>
    </source>
</evidence>
<evidence type="ECO:0000255" key="4">
    <source>
        <dbReference type="PROSITE-ProRule" id="PRU01150"/>
    </source>
</evidence>
<evidence type="ECO:0000256" key="5">
    <source>
        <dbReference type="SAM" id="MobiDB-lite"/>
    </source>
</evidence>
<gene>
    <name type="primary">chchd4</name>
    <name type="synonym">mia40</name>
    <name type="ORF">zgc:100849</name>
</gene>
<feature type="chain" id="PRO_0000235278" description="Mitochondrial intermembrane space import and assembly protein 40">
    <location>
        <begin position="1"/>
        <end position="146"/>
    </location>
</feature>
<feature type="domain" description="CHCH" evidence="4">
    <location>
        <begin position="61"/>
        <end position="105"/>
    </location>
</feature>
<feature type="region of interest" description="Disordered" evidence="5">
    <location>
        <begin position="101"/>
        <end position="146"/>
    </location>
</feature>
<feature type="short sequence motif" description="Cx9C motif 1" evidence="4">
    <location>
        <begin position="64"/>
        <end position="74"/>
    </location>
</feature>
<feature type="short sequence motif" description="Cx9C motif 2" evidence="4">
    <location>
        <begin position="87"/>
        <end position="97"/>
    </location>
</feature>
<feature type="compositionally biased region" description="Low complexity" evidence="5">
    <location>
        <begin position="123"/>
        <end position="140"/>
    </location>
</feature>
<feature type="disulfide bond" description="Redox-active" evidence="3">
    <location>
        <begin position="53"/>
        <end position="55"/>
    </location>
</feature>
<feature type="disulfide bond" evidence="4">
    <location>
        <begin position="64"/>
        <end position="97"/>
    </location>
</feature>
<feature type="disulfide bond" evidence="4">
    <location>
        <begin position="74"/>
        <end position="87"/>
    </location>
</feature>
<proteinExistence type="evidence at transcript level"/>
<comment type="function">
    <text evidence="2 3">Central component of a redox-sensitive mitochondrial intermembrane space import machinery which is required for the biogenesis of respiratory chain complexes (By similarity). Functions as chaperone and catalyzes the formation of disulfide bonds in substrate proteins, such as COX17 or MICU1. Required for the import and folding of small cysteine-containing proteins (small Tim) in the mitochondrial intermembrane space (IMS). Precursor proteins to be imported into the IMS are translocated in their reduced form into the mitochondria.</text>
</comment>
<comment type="subunit">
    <text evidence="3">Monomer. Can form homooligomers.</text>
</comment>
<comment type="subcellular location">
    <subcellularLocation>
        <location evidence="3">Mitochondrion intermembrane space</location>
    </subcellularLocation>
</comment>
<comment type="domain">
    <text evidence="1">The CHCH domain contains a conserved twin Cys-X(9)-Cys motif which is required for import and stability of chchd4/mia40 in mitochondria.</text>
</comment>